<gene>
    <name evidence="1" type="primary">rplF</name>
    <name evidence="1" type="synonym">rpl6</name>
    <name type="ordered locus">MAE_57290</name>
</gene>
<proteinExistence type="inferred from homology"/>
<protein>
    <recommendedName>
        <fullName evidence="1">Large ribosomal subunit protein uL6</fullName>
    </recommendedName>
    <alternativeName>
        <fullName evidence="2">50S ribosomal protein L6</fullName>
    </alternativeName>
</protein>
<name>RL6_MICAN</name>
<keyword id="KW-0687">Ribonucleoprotein</keyword>
<keyword id="KW-0689">Ribosomal protein</keyword>
<keyword id="KW-0694">RNA-binding</keyword>
<keyword id="KW-0699">rRNA-binding</keyword>
<dbReference type="EMBL" id="AP009552">
    <property type="protein sequence ID" value="BAG05551.1"/>
    <property type="molecule type" value="Genomic_DNA"/>
</dbReference>
<dbReference type="RefSeq" id="WP_002796422.1">
    <property type="nucleotide sequence ID" value="NC_010296.1"/>
</dbReference>
<dbReference type="SMR" id="B0JHY9"/>
<dbReference type="STRING" id="449447.MAE_57290"/>
<dbReference type="PaxDb" id="449447-MAE_57290"/>
<dbReference type="EnsemblBacteria" id="BAG05551">
    <property type="protein sequence ID" value="BAG05551"/>
    <property type="gene ID" value="MAE_57290"/>
</dbReference>
<dbReference type="GeneID" id="66707887"/>
<dbReference type="KEGG" id="mar:MAE_57290"/>
<dbReference type="eggNOG" id="COG0097">
    <property type="taxonomic scope" value="Bacteria"/>
</dbReference>
<dbReference type="HOGENOM" id="CLU_065464_1_2_3"/>
<dbReference type="BioCyc" id="MAER449447:MAE_RS24960-MONOMER"/>
<dbReference type="Proteomes" id="UP000001510">
    <property type="component" value="Chromosome"/>
</dbReference>
<dbReference type="GO" id="GO:0022625">
    <property type="term" value="C:cytosolic large ribosomal subunit"/>
    <property type="evidence" value="ECO:0007669"/>
    <property type="project" value="TreeGrafter"/>
</dbReference>
<dbReference type="GO" id="GO:0019843">
    <property type="term" value="F:rRNA binding"/>
    <property type="evidence" value="ECO:0007669"/>
    <property type="project" value="UniProtKB-UniRule"/>
</dbReference>
<dbReference type="GO" id="GO:0003735">
    <property type="term" value="F:structural constituent of ribosome"/>
    <property type="evidence" value="ECO:0007669"/>
    <property type="project" value="InterPro"/>
</dbReference>
<dbReference type="GO" id="GO:0002181">
    <property type="term" value="P:cytoplasmic translation"/>
    <property type="evidence" value="ECO:0007669"/>
    <property type="project" value="TreeGrafter"/>
</dbReference>
<dbReference type="FunFam" id="3.90.930.12:FF:000001">
    <property type="entry name" value="50S ribosomal protein L6"/>
    <property type="match status" value="1"/>
</dbReference>
<dbReference type="FunFam" id="3.90.930.12:FF:000002">
    <property type="entry name" value="50S ribosomal protein L6"/>
    <property type="match status" value="1"/>
</dbReference>
<dbReference type="Gene3D" id="3.90.930.12">
    <property type="entry name" value="Ribosomal protein L6, alpha-beta domain"/>
    <property type="match status" value="2"/>
</dbReference>
<dbReference type="HAMAP" id="MF_01365_B">
    <property type="entry name" value="Ribosomal_uL6_B"/>
    <property type="match status" value="1"/>
</dbReference>
<dbReference type="InterPro" id="IPR000702">
    <property type="entry name" value="Ribosomal_uL6-like"/>
</dbReference>
<dbReference type="InterPro" id="IPR036789">
    <property type="entry name" value="Ribosomal_uL6-like_a/b-dom_sf"/>
</dbReference>
<dbReference type="InterPro" id="IPR020040">
    <property type="entry name" value="Ribosomal_uL6_a/b-dom"/>
</dbReference>
<dbReference type="InterPro" id="IPR019906">
    <property type="entry name" value="Ribosomal_uL6_bac-type"/>
</dbReference>
<dbReference type="InterPro" id="IPR002358">
    <property type="entry name" value="Ribosomal_uL6_CS"/>
</dbReference>
<dbReference type="NCBIfam" id="TIGR03654">
    <property type="entry name" value="L6_bact"/>
    <property type="match status" value="1"/>
</dbReference>
<dbReference type="PANTHER" id="PTHR11655">
    <property type="entry name" value="60S/50S RIBOSOMAL PROTEIN L6/L9"/>
    <property type="match status" value="1"/>
</dbReference>
<dbReference type="PANTHER" id="PTHR11655:SF14">
    <property type="entry name" value="LARGE RIBOSOMAL SUBUNIT PROTEIN UL6M"/>
    <property type="match status" value="1"/>
</dbReference>
<dbReference type="Pfam" id="PF00347">
    <property type="entry name" value="Ribosomal_L6"/>
    <property type="match status" value="2"/>
</dbReference>
<dbReference type="PIRSF" id="PIRSF002162">
    <property type="entry name" value="Ribosomal_L6"/>
    <property type="match status" value="1"/>
</dbReference>
<dbReference type="PRINTS" id="PR00059">
    <property type="entry name" value="RIBOSOMALL6"/>
</dbReference>
<dbReference type="SUPFAM" id="SSF56053">
    <property type="entry name" value="Ribosomal protein L6"/>
    <property type="match status" value="2"/>
</dbReference>
<dbReference type="PROSITE" id="PS00525">
    <property type="entry name" value="RIBOSOMAL_L6_1"/>
    <property type="match status" value="1"/>
</dbReference>
<evidence type="ECO:0000255" key="1">
    <source>
        <dbReference type="HAMAP-Rule" id="MF_01365"/>
    </source>
</evidence>
<evidence type="ECO:0000305" key="2"/>
<reference key="1">
    <citation type="journal article" date="2007" name="DNA Res.">
        <title>Complete genomic structure of the bloom-forming toxic cyanobacterium Microcystis aeruginosa NIES-843.</title>
        <authorList>
            <person name="Kaneko T."/>
            <person name="Nakajima N."/>
            <person name="Okamoto S."/>
            <person name="Suzuki I."/>
            <person name="Tanabe Y."/>
            <person name="Tamaoki M."/>
            <person name="Nakamura Y."/>
            <person name="Kasai F."/>
            <person name="Watanabe A."/>
            <person name="Kawashima K."/>
            <person name="Kishida Y."/>
            <person name="Ono A."/>
            <person name="Shimizu Y."/>
            <person name="Takahashi C."/>
            <person name="Minami C."/>
            <person name="Fujishiro T."/>
            <person name="Kohara M."/>
            <person name="Katoh M."/>
            <person name="Nakazaki N."/>
            <person name="Nakayama S."/>
            <person name="Yamada M."/>
            <person name="Tabata S."/>
            <person name="Watanabe M.M."/>
        </authorList>
    </citation>
    <scope>NUCLEOTIDE SEQUENCE [LARGE SCALE GENOMIC DNA]</scope>
    <source>
        <strain>NIES-843 / IAM M-247</strain>
    </source>
</reference>
<organism>
    <name type="scientific">Microcystis aeruginosa (strain NIES-843 / IAM M-2473)</name>
    <dbReference type="NCBI Taxonomy" id="449447"/>
    <lineage>
        <taxon>Bacteria</taxon>
        <taxon>Bacillati</taxon>
        <taxon>Cyanobacteriota</taxon>
        <taxon>Cyanophyceae</taxon>
        <taxon>Oscillatoriophycideae</taxon>
        <taxon>Chroococcales</taxon>
        <taxon>Microcystaceae</taxon>
        <taxon>Microcystis</taxon>
    </lineage>
</organism>
<feature type="chain" id="PRO_1000087050" description="Large ribosomal subunit protein uL6">
    <location>
        <begin position="1"/>
        <end position="189"/>
    </location>
</feature>
<accession>B0JHY9</accession>
<comment type="function">
    <text evidence="1">This protein binds to the 23S rRNA, and is important in its secondary structure. It is located near the subunit interface in the base of the L7/L12 stalk, and near the tRNA binding site of the peptidyltransferase center.</text>
</comment>
<comment type="subunit">
    <text evidence="1">Part of the 50S ribosomal subunit.</text>
</comment>
<comment type="similarity">
    <text evidence="1">Belongs to the universal ribosomal protein uL6 family.</text>
</comment>
<sequence>MSRIGKRPIPIPNKVTVDIDGATVTVKGPKGTLQRTLPTAVAINKDGETLLVTRQDDSRTARERHGLCRTLVANMVEGVATGFQKRLDIQGVGYRAQAQGSKLVLNVGYSKPVEMEMPDGVSVAVENSTQVIVSGIDKEAVGNTAAKIREVRPPEPYKGKGIRYLGEVVRRKVGKAGGKGAKGGKGGKK</sequence>